<proteinExistence type="inferred from homology"/>
<accession>Q59QH6</accession>
<accession>A0A1D8PD66</accession>
<evidence type="ECO:0000250" key="1">
    <source>
        <dbReference type="UniProtKB" id="Q03954"/>
    </source>
</evidence>
<evidence type="ECO:0000250" key="2">
    <source>
        <dbReference type="UniProtKB" id="Q50HP3"/>
    </source>
</evidence>
<evidence type="ECO:0000255" key="3"/>
<evidence type="ECO:0000269" key="4">
    <source>
    </source>
</evidence>
<evidence type="ECO:0000269" key="5">
    <source>
    </source>
</evidence>
<evidence type="ECO:0000305" key="6"/>
<organism>
    <name type="scientific">Candida albicans (strain SC5314 / ATCC MYA-2876)</name>
    <name type="common">Yeast</name>
    <dbReference type="NCBI Taxonomy" id="237561"/>
    <lineage>
        <taxon>Eukaryota</taxon>
        <taxon>Fungi</taxon>
        <taxon>Dikarya</taxon>
        <taxon>Ascomycota</taxon>
        <taxon>Saccharomycotina</taxon>
        <taxon>Pichiomycetes</taxon>
        <taxon>Debaryomycetaceae</taxon>
        <taxon>Candida/Lodderomyces clade</taxon>
        <taxon>Candida</taxon>
    </lineage>
</organism>
<protein>
    <recommendedName>
        <fullName>DASH complex subunit SPC19</fullName>
    </recommendedName>
    <alternativeName>
        <fullName>Outer kinetochore protein SPC19</fullName>
    </alternativeName>
</protein>
<sequence length="175" mass="20454">MTQQDLPQNQRFNNLDNCTDSLRQSIKILQQSNKILDETLQDSTRLTKILSTNKVFDLIPELDLNDAKSNFTKNITPQLNQQLNKLEDELIQLQTKKTTLTNKLKLINVRLKNYEKKGNKEEGGKNFNSNGLSDIDIDNLLTNRHKNGYDVNKLHQLRFLRDKKTRLQYSLNRLN</sequence>
<name>SPC19_CANAL</name>
<reference key="1">
    <citation type="journal article" date="2004" name="Proc. Natl. Acad. Sci. U.S.A.">
        <title>The diploid genome sequence of Candida albicans.</title>
        <authorList>
            <person name="Jones T."/>
            <person name="Federspiel N.A."/>
            <person name="Chibana H."/>
            <person name="Dungan J."/>
            <person name="Kalman S."/>
            <person name="Magee B.B."/>
            <person name="Newport G."/>
            <person name="Thorstenson Y.R."/>
            <person name="Agabian N."/>
            <person name="Magee P.T."/>
            <person name="Davis R.W."/>
            <person name="Scherer S."/>
        </authorList>
    </citation>
    <scope>NUCLEOTIDE SEQUENCE [LARGE SCALE GENOMIC DNA]</scope>
    <source>
        <strain>SC5314 / ATCC MYA-2876</strain>
    </source>
</reference>
<reference key="2">
    <citation type="journal article" date="2007" name="Genome Biol.">
        <title>Assembly of the Candida albicans genome into sixteen supercontigs aligned on the eight chromosomes.</title>
        <authorList>
            <person name="van het Hoog M."/>
            <person name="Rast T.J."/>
            <person name="Martchenko M."/>
            <person name="Grindle S."/>
            <person name="Dignard D."/>
            <person name="Hogues H."/>
            <person name="Cuomo C."/>
            <person name="Berriman M."/>
            <person name="Scherer S."/>
            <person name="Magee B.B."/>
            <person name="Whiteway M."/>
            <person name="Chibana H."/>
            <person name="Nantel A."/>
            <person name="Magee P.T."/>
        </authorList>
    </citation>
    <scope>GENOME REANNOTATION</scope>
    <source>
        <strain>SC5314 / ATCC MYA-2876</strain>
    </source>
</reference>
<reference key="3">
    <citation type="journal article" date="2013" name="Genome Biol.">
        <title>Assembly of a phased diploid Candida albicans genome facilitates allele-specific measurements and provides a simple model for repeat and indel structure.</title>
        <authorList>
            <person name="Muzzey D."/>
            <person name="Schwartz K."/>
            <person name="Weissman J.S."/>
            <person name="Sherlock G."/>
        </authorList>
    </citation>
    <scope>NUCLEOTIDE SEQUENCE [LARGE SCALE GENOMIC DNA]</scope>
    <scope>GENOME REANNOTATION</scope>
    <source>
        <strain>SC5314 / ATCC MYA-2876</strain>
    </source>
</reference>
<reference key="4">
    <citation type="journal article" date="2011" name="Curr. Biol.">
        <title>The requirement for the Dam1 complex is dependent upon the number of kinetochore proteins and microtubules.</title>
        <authorList>
            <person name="Burrack L.S."/>
            <person name="Applen S.E."/>
            <person name="Berman J."/>
        </authorList>
    </citation>
    <scope>DISRUPTION PHENOTYPE</scope>
</reference>
<reference key="5">
    <citation type="journal article" date="2011" name="Eukaryot. Cell">
        <title>The essentiality of the fungus-specific Dam1 complex is correlated with a one-kinetochore-one-microtubule interaction present throughout the cell cycle, independent of the nature of a centromere.</title>
        <authorList>
            <person name="Thakur J."/>
            <person name="Sanyal K."/>
        </authorList>
    </citation>
    <scope>DISRUPTION PHENOTYPE</scope>
</reference>
<feature type="chain" id="PRO_0000142587" description="DASH complex subunit SPC19">
    <location>
        <begin position="1"/>
        <end position="175"/>
    </location>
</feature>
<feature type="coiled-coil region" evidence="3">
    <location>
        <begin position="70"/>
        <end position="122"/>
    </location>
</feature>
<gene>
    <name type="primary">SPC19</name>
    <name type="ordered locus">CAALFM_C103980WA</name>
    <name type="ORF">CaO19.11953</name>
    <name type="ORF">CaO19.4473</name>
</gene>
<dbReference type="EMBL" id="CP017623">
    <property type="protein sequence ID" value="AOW26073.1"/>
    <property type="molecule type" value="Genomic_DNA"/>
</dbReference>
<dbReference type="RefSeq" id="XP_711967.2">
    <property type="nucleotide sequence ID" value="XM_706874.2"/>
</dbReference>
<dbReference type="SMR" id="Q59QH6"/>
<dbReference type="BioGRID" id="1229516">
    <property type="interactions" value="1"/>
</dbReference>
<dbReference type="FunCoup" id="Q59QH6">
    <property type="interactions" value="35"/>
</dbReference>
<dbReference type="STRING" id="237561.Q59QH6"/>
<dbReference type="EnsemblFungi" id="C1_03980W_A-T">
    <property type="protein sequence ID" value="C1_03980W_A-T-p1"/>
    <property type="gene ID" value="C1_03980W_A"/>
</dbReference>
<dbReference type="GeneID" id="3646423"/>
<dbReference type="KEGG" id="cal:CAALFM_C103980WA"/>
<dbReference type="CGD" id="CAL0000196840">
    <property type="gene designation" value="SPC19"/>
</dbReference>
<dbReference type="VEuPathDB" id="FungiDB:C1_03980W_A"/>
<dbReference type="eggNOG" id="ENOG502SDEQ">
    <property type="taxonomic scope" value="Eukaryota"/>
</dbReference>
<dbReference type="HOGENOM" id="CLU_112993_1_0_1"/>
<dbReference type="InParanoid" id="Q59QH6"/>
<dbReference type="OrthoDB" id="3361333at2759"/>
<dbReference type="PRO" id="PR:Q59QH6"/>
<dbReference type="Proteomes" id="UP000000559">
    <property type="component" value="Chromosome 1"/>
</dbReference>
<dbReference type="GO" id="GO:0005737">
    <property type="term" value="C:cytoplasm"/>
    <property type="evidence" value="ECO:0007669"/>
    <property type="project" value="UniProtKB-KW"/>
</dbReference>
<dbReference type="GO" id="GO:0042729">
    <property type="term" value="C:DASH complex"/>
    <property type="evidence" value="ECO:0000250"/>
    <property type="project" value="UniProtKB"/>
</dbReference>
<dbReference type="GO" id="GO:0005876">
    <property type="term" value="C:spindle microtubule"/>
    <property type="evidence" value="ECO:0007669"/>
    <property type="project" value="InterPro"/>
</dbReference>
<dbReference type="GO" id="GO:0008608">
    <property type="term" value="P:attachment of spindle microtubules to kinetochore"/>
    <property type="evidence" value="ECO:0000250"/>
    <property type="project" value="UniProtKB"/>
</dbReference>
<dbReference type="GO" id="GO:0051301">
    <property type="term" value="P:cell division"/>
    <property type="evidence" value="ECO:0007669"/>
    <property type="project" value="UniProtKB-KW"/>
</dbReference>
<dbReference type="GO" id="GO:0030447">
    <property type="term" value="P:filamentous growth"/>
    <property type="evidence" value="ECO:0000315"/>
    <property type="project" value="CGD"/>
</dbReference>
<dbReference type="GO" id="GO:1990758">
    <property type="term" value="P:mitotic sister chromatid biorientation"/>
    <property type="evidence" value="ECO:0000250"/>
    <property type="project" value="UniProtKB"/>
</dbReference>
<dbReference type="GO" id="GO:0007052">
    <property type="term" value="P:mitotic spindle organization"/>
    <property type="evidence" value="ECO:0000247"/>
    <property type="project" value="CGD"/>
</dbReference>
<dbReference type="GO" id="GO:1990976">
    <property type="term" value="P:protein transport along microtubule to mitotic spindle pole body"/>
    <property type="evidence" value="ECO:0000250"/>
    <property type="project" value="UniProtKB"/>
</dbReference>
<dbReference type="InterPro" id="IPR013251">
    <property type="entry name" value="DASH_Spc19"/>
</dbReference>
<dbReference type="PANTHER" id="PTHR28262">
    <property type="entry name" value="DASH COMPLEX SUBUNIT SPC19"/>
    <property type="match status" value="1"/>
</dbReference>
<dbReference type="PANTHER" id="PTHR28262:SF1">
    <property type="entry name" value="DASH COMPLEX SUBUNIT SPC19"/>
    <property type="match status" value="1"/>
</dbReference>
<dbReference type="Pfam" id="PF08287">
    <property type="entry name" value="DASH_Spc19"/>
    <property type="match status" value="1"/>
</dbReference>
<comment type="function">
    <text evidence="1">Component of the DASH complex that connects microtubules with kinetochores and couples microtubule depolymerisation to chromosome movement; it is involved in retrieving kinetochores to the spindle poles before their re-orientation on the spindle in early mitosis and allows microtubule depolymerization to pull chromosomes apart and resist detachment during anaphase. Kinetochores, consisting of a centromere-associated inner segment and a microtubule-contacting outer segment, play a crucial role in chromosome segregation by mediating the physical connection between centromeric DNA and microtubules. Kinetochores also serve as an input point for the spindle assembly checkpoint, which delays anaphase until all chromosomes have bioriented on the mitotic spindle.</text>
</comment>
<comment type="subunit">
    <text evidence="1 2">Component of the DASH complex consisting of ASK1, DAD1, DAD2, DAD3, DAD4, DAM1, DUO1, HSK3, SPC19 and SPC34, with a stoichiometry of one copy of each subunit per complex. Multiple DASH complexes oligomerize to form a ring that encircles spindle microtubules and organizes the rod-like NDC80 complexes of the outer kinetochore. DASH complex oligomerization strengthens microtubule attachments (By similarity). On cytoplasmic microtubules, DASH complexes appear to form patches instead of rings (By similarity).</text>
</comment>
<comment type="subcellular location">
    <subcellularLocation>
        <location evidence="1">Nucleus</location>
    </subcellularLocation>
    <subcellularLocation>
        <location evidence="1">Cytoplasm</location>
        <location evidence="1">Cytoskeleton</location>
        <location evidence="1">Spindle</location>
    </subcellularLocation>
    <subcellularLocation>
        <location evidence="1">Chromosome</location>
        <location evidence="1">Centromere</location>
        <location evidence="1">Kinetochore</location>
    </subcellularLocation>
</comment>
<comment type="disruption phenotype">
    <text evidence="4 5">Cell cycle arrest in mitosis either with unseparated DNA or with unequally segregated chromosomes (PubMed:21571923). Abnormal spindle morphology (PubMed:21571923). Inviable (PubMed:21549601, PubMed:21571923).</text>
</comment>
<comment type="similarity">
    <text evidence="6">Belongs to the DASH complex SPC19 family.</text>
</comment>
<keyword id="KW-0131">Cell cycle</keyword>
<keyword id="KW-0132">Cell division</keyword>
<keyword id="KW-0137">Centromere</keyword>
<keyword id="KW-0158">Chromosome</keyword>
<keyword id="KW-0159">Chromosome partition</keyword>
<keyword id="KW-0175">Coiled coil</keyword>
<keyword id="KW-0963">Cytoplasm</keyword>
<keyword id="KW-0206">Cytoskeleton</keyword>
<keyword id="KW-0995">Kinetochore</keyword>
<keyword id="KW-0493">Microtubule</keyword>
<keyword id="KW-0498">Mitosis</keyword>
<keyword id="KW-0539">Nucleus</keyword>
<keyword id="KW-1185">Reference proteome</keyword>